<keyword id="KW-0028">Amino-acid biosynthesis</keyword>
<keyword id="KW-0067">ATP-binding</keyword>
<keyword id="KW-0963">Cytoplasm</keyword>
<keyword id="KW-0368">Histidine biosynthesis</keyword>
<keyword id="KW-0378">Hydrolase</keyword>
<keyword id="KW-0547">Nucleotide-binding</keyword>
<keyword id="KW-1185">Reference proteome</keyword>
<sequence length="104" mass="11174">MNTLQRLEATIAARRNADPDSSYVARLNAKGLPKMAEKVGEEATETVIAALTGSDEELVGEGADLIFHLLVLLQARGVSLDQVLAELDRREGLSGLDEKAKRGD</sequence>
<dbReference type="EC" id="3.6.1.31" evidence="1"/>
<dbReference type="EMBL" id="CP000157">
    <property type="protein sequence ID" value="ABC64002.1"/>
    <property type="molecule type" value="Genomic_DNA"/>
</dbReference>
<dbReference type="RefSeq" id="WP_011414830.1">
    <property type="nucleotide sequence ID" value="NC_007722.1"/>
</dbReference>
<dbReference type="SMR" id="Q2N8I9"/>
<dbReference type="STRING" id="314225.ELI_09550"/>
<dbReference type="KEGG" id="eli:ELI_09550"/>
<dbReference type="eggNOG" id="COG0140">
    <property type="taxonomic scope" value="Bacteria"/>
</dbReference>
<dbReference type="HOGENOM" id="CLU_123337_1_2_5"/>
<dbReference type="UniPathway" id="UPA00031">
    <property type="reaction ID" value="UER00007"/>
</dbReference>
<dbReference type="Proteomes" id="UP000008808">
    <property type="component" value="Chromosome"/>
</dbReference>
<dbReference type="GO" id="GO:0005737">
    <property type="term" value="C:cytoplasm"/>
    <property type="evidence" value="ECO:0007669"/>
    <property type="project" value="UniProtKB-SubCell"/>
</dbReference>
<dbReference type="GO" id="GO:0005524">
    <property type="term" value="F:ATP binding"/>
    <property type="evidence" value="ECO:0007669"/>
    <property type="project" value="UniProtKB-KW"/>
</dbReference>
<dbReference type="GO" id="GO:0004636">
    <property type="term" value="F:phosphoribosyl-ATP diphosphatase activity"/>
    <property type="evidence" value="ECO:0007669"/>
    <property type="project" value="UniProtKB-UniRule"/>
</dbReference>
<dbReference type="GO" id="GO:0000105">
    <property type="term" value="P:L-histidine biosynthetic process"/>
    <property type="evidence" value="ECO:0007669"/>
    <property type="project" value="UniProtKB-UniRule"/>
</dbReference>
<dbReference type="CDD" id="cd11534">
    <property type="entry name" value="NTP-PPase_HisIE_like"/>
    <property type="match status" value="1"/>
</dbReference>
<dbReference type="FunFam" id="1.10.287.1080:FF:000002">
    <property type="entry name" value="Histidine biosynthesis bifunctional protein HisIE"/>
    <property type="match status" value="1"/>
</dbReference>
<dbReference type="Gene3D" id="1.10.287.1080">
    <property type="entry name" value="MazG-like"/>
    <property type="match status" value="1"/>
</dbReference>
<dbReference type="HAMAP" id="MF_01020">
    <property type="entry name" value="HisE"/>
    <property type="match status" value="1"/>
</dbReference>
<dbReference type="InterPro" id="IPR008179">
    <property type="entry name" value="HisE"/>
</dbReference>
<dbReference type="InterPro" id="IPR021130">
    <property type="entry name" value="PRib-ATP_PPHydrolase-like"/>
</dbReference>
<dbReference type="NCBIfam" id="TIGR03188">
    <property type="entry name" value="histidine_hisI"/>
    <property type="match status" value="1"/>
</dbReference>
<dbReference type="NCBIfam" id="NF001611">
    <property type="entry name" value="PRK00400.1-3"/>
    <property type="match status" value="1"/>
</dbReference>
<dbReference type="NCBIfam" id="NF001613">
    <property type="entry name" value="PRK00400.1-5"/>
    <property type="match status" value="1"/>
</dbReference>
<dbReference type="PANTHER" id="PTHR42945">
    <property type="entry name" value="HISTIDINE BIOSYNTHESIS BIFUNCTIONAL PROTEIN"/>
    <property type="match status" value="1"/>
</dbReference>
<dbReference type="PANTHER" id="PTHR42945:SF9">
    <property type="entry name" value="HISTIDINE BIOSYNTHESIS BIFUNCTIONAL PROTEIN HISIE"/>
    <property type="match status" value="1"/>
</dbReference>
<dbReference type="Pfam" id="PF01503">
    <property type="entry name" value="PRA-PH"/>
    <property type="match status" value="1"/>
</dbReference>
<dbReference type="SUPFAM" id="SSF101386">
    <property type="entry name" value="all-alpha NTP pyrophosphatases"/>
    <property type="match status" value="1"/>
</dbReference>
<evidence type="ECO:0000255" key="1">
    <source>
        <dbReference type="HAMAP-Rule" id="MF_01020"/>
    </source>
</evidence>
<gene>
    <name evidence="1" type="primary">hisE</name>
    <name type="ordered locus">ELI_09550</name>
</gene>
<organism>
    <name type="scientific">Erythrobacter litoralis (strain HTCC2594)</name>
    <dbReference type="NCBI Taxonomy" id="314225"/>
    <lineage>
        <taxon>Bacteria</taxon>
        <taxon>Pseudomonadati</taxon>
        <taxon>Pseudomonadota</taxon>
        <taxon>Alphaproteobacteria</taxon>
        <taxon>Sphingomonadales</taxon>
        <taxon>Erythrobacteraceae</taxon>
        <taxon>Erythrobacter/Porphyrobacter group</taxon>
        <taxon>Erythrobacter</taxon>
    </lineage>
</organism>
<protein>
    <recommendedName>
        <fullName evidence="1">Phosphoribosyl-ATP pyrophosphatase</fullName>
        <shortName evidence="1">PRA-PH</shortName>
        <ecNumber evidence="1">3.6.1.31</ecNumber>
    </recommendedName>
</protein>
<name>HIS2_ERYLH</name>
<accession>Q2N8I9</accession>
<comment type="catalytic activity">
    <reaction evidence="1">
        <text>1-(5-phospho-beta-D-ribosyl)-ATP + H2O = 1-(5-phospho-beta-D-ribosyl)-5'-AMP + diphosphate + H(+)</text>
        <dbReference type="Rhea" id="RHEA:22828"/>
        <dbReference type="ChEBI" id="CHEBI:15377"/>
        <dbReference type="ChEBI" id="CHEBI:15378"/>
        <dbReference type="ChEBI" id="CHEBI:33019"/>
        <dbReference type="ChEBI" id="CHEBI:59457"/>
        <dbReference type="ChEBI" id="CHEBI:73183"/>
        <dbReference type="EC" id="3.6.1.31"/>
    </reaction>
</comment>
<comment type="pathway">
    <text evidence="1">Amino-acid biosynthesis; L-histidine biosynthesis; L-histidine from 5-phospho-alpha-D-ribose 1-diphosphate: step 2/9.</text>
</comment>
<comment type="subcellular location">
    <subcellularLocation>
        <location evidence="1">Cytoplasm</location>
    </subcellularLocation>
</comment>
<comment type="similarity">
    <text evidence="1">Belongs to the PRA-PH family.</text>
</comment>
<feature type="chain" id="PRO_0000319646" description="Phosphoribosyl-ATP pyrophosphatase">
    <location>
        <begin position="1"/>
        <end position="104"/>
    </location>
</feature>
<reference key="1">
    <citation type="journal article" date="2009" name="J. Bacteriol.">
        <title>Complete genome sequence of Erythrobacter litoralis HTCC2594.</title>
        <authorList>
            <person name="Oh H.M."/>
            <person name="Giovannoni S.J."/>
            <person name="Ferriera S."/>
            <person name="Johnson J."/>
            <person name="Cho J.C."/>
        </authorList>
    </citation>
    <scope>NUCLEOTIDE SEQUENCE [LARGE SCALE GENOMIC DNA]</scope>
    <source>
        <strain>HTCC2594</strain>
    </source>
</reference>
<proteinExistence type="inferred from homology"/>